<accession>P24600</accession>
<comment type="function">
    <text evidence="3 5 6">A methylase that recognizes the double-stranded sequence 5'-GRCGYC-3', methylates C-? on both strands, and protects the DNA from cleavage by the HgiDI endonuclease.</text>
</comment>
<comment type="catalytic activity">
    <reaction evidence="2">
        <text>a 2'-deoxycytidine in DNA + S-adenosyl-L-methionine = a 5-methyl-2'-deoxycytidine in DNA + S-adenosyl-L-homocysteine + H(+)</text>
        <dbReference type="Rhea" id="RHEA:13681"/>
        <dbReference type="Rhea" id="RHEA-COMP:11369"/>
        <dbReference type="Rhea" id="RHEA-COMP:11370"/>
        <dbReference type="ChEBI" id="CHEBI:15378"/>
        <dbReference type="ChEBI" id="CHEBI:57856"/>
        <dbReference type="ChEBI" id="CHEBI:59789"/>
        <dbReference type="ChEBI" id="CHEBI:85452"/>
        <dbReference type="ChEBI" id="CHEBI:85454"/>
        <dbReference type="EC" id="2.1.1.37"/>
    </reaction>
</comment>
<comment type="similarity">
    <text evidence="1">Belongs to the class I-like SAM-binding methyltransferase superfamily. C5-methyltransferase family.</text>
</comment>
<sequence>MKTIDLFAGCGGMSLGFMQAGFEIVAAVDNWRPAINTYQQNFTHPIHELDLAQIDAAVSLIKTHSPELIIGGPPCQDFSSAGKRDEGLGRANLTLDFAKIVLAIQPAWVIMENVERARLSKIHQQACSMLGDEGYSLAQVVLDASLCGVPQLRKRTFVIGHRHGSIADLANVLQQRLAKQSLTVRDYFGESLDTDYYYRHPRTYERRAIFSVNEPSPTIRGVNRPIPATYRMHPKDAGDVSLARPLTTKERSLIQTFPLDFKFVGTKSEQEQMIGNAVPVNLAFFLATSLQAYLNQPRMQQLSLLPSFF</sequence>
<organism>
    <name type="scientific">Herpetosiphon aurantiacus</name>
    <name type="common">Herpetosiphon giganteus</name>
    <dbReference type="NCBI Taxonomy" id="65"/>
    <lineage>
        <taxon>Bacteria</taxon>
        <taxon>Bacillati</taxon>
        <taxon>Chloroflexota</taxon>
        <taxon>Chloroflexia</taxon>
        <taxon>Herpetosiphonales</taxon>
        <taxon>Herpetosiphonaceae</taxon>
        <taxon>Herpetosiphon</taxon>
    </lineage>
</organism>
<keyword id="KW-0238">DNA-binding</keyword>
<keyword id="KW-0489">Methyltransferase</keyword>
<keyword id="KW-0680">Restriction system</keyword>
<keyword id="KW-0949">S-adenosyl-L-methionine</keyword>
<keyword id="KW-0808">Transferase</keyword>
<dbReference type="EC" id="2.1.1.37"/>
<dbReference type="EMBL" id="X55140">
    <property type="protein sequence ID" value="CAA38938.1"/>
    <property type="molecule type" value="Genomic_DNA"/>
</dbReference>
<dbReference type="PIR" id="S14029">
    <property type="entry name" value="S14029"/>
</dbReference>
<dbReference type="SMR" id="P24600"/>
<dbReference type="REBASE" id="3417">
    <property type="entry name" value="M.HgiDI"/>
</dbReference>
<dbReference type="PRO" id="PR:P24600"/>
<dbReference type="GO" id="GO:0003886">
    <property type="term" value="F:DNA (cytosine-5-)-methyltransferase activity"/>
    <property type="evidence" value="ECO:0007669"/>
    <property type="project" value="UniProtKB-EC"/>
</dbReference>
<dbReference type="GO" id="GO:0003677">
    <property type="term" value="F:DNA binding"/>
    <property type="evidence" value="ECO:0007669"/>
    <property type="project" value="UniProtKB-KW"/>
</dbReference>
<dbReference type="GO" id="GO:0009307">
    <property type="term" value="P:DNA restriction-modification system"/>
    <property type="evidence" value="ECO:0007669"/>
    <property type="project" value="UniProtKB-KW"/>
</dbReference>
<dbReference type="GO" id="GO:0032259">
    <property type="term" value="P:methylation"/>
    <property type="evidence" value="ECO:0007669"/>
    <property type="project" value="UniProtKB-KW"/>
</dbReference>
<dbReference type="GO" id="GO:0044027">
    <property type="term" value="P:negative regulation of gene expression via chromosomal CpG island methylation"/>
    <property type="evidence" value="ECO:0007669"/>
    <property type="project" value="TreeGrafter"/>
</dbReference>
<dbReference type="CDD" id="cd00315">
    <property type="entry name" value="Cyt_C5_DNA_methylase"/>
    <property type="match status" value="1"/>
</dbReference>
<dbReference type="Gene3D" id="3.90.120.10">
    <property type="entry name" value="DNA Methylase, subunit A, domain 2"/>
    <property type="match status" value="1"/>
</dbReference>
<dbReference type="Gene3D" id="3.40.50.150">
    <property type="entry name" value="Vaccinia Virus protein VP39"/>
    <property type="match status" value="1"/>
</dbReference>
<dbReference type="InterPro" id="IPR050390">
    <property type="entry name" value="C5-Methyltransferase"/>
</dbReference>
<dbReference type="InterPro" id="IPR018117">
    <property type="entry name" value="C5_DNA_meth_AS"/>
</dbReference>
<dbReference type="InterPro" id="IPR001525">
    <property type="entry name" value="C5_MeTfrase"/>
</dbReference>
<dbReference type="InterPro" id="IPR031303">
    <property type="entry name" value="C5_meth_CS"/>
</dbReference>
<dbReference type="InterPro" id="IPR029063">
    <property type="entry name" value="SAM-dependent_MTases_sf"/>
</dbReference>
<dbReference type="NCBIfam" id="TIGR00675">
    <property type="entry name" value="dcm"/>
    <property type="match status" value="1"/>
</dbReference>
<dbReference type="PANTHER" id="PTHR10629">
    <property type="entry name" value="CYTOSINE-SPECIFIC METHYLTRANSFERASE"/>
    <property type="match status" value="1"/>
</dbReference>
<dbReference type="PANTHER" id="PTHR10629:SF52">
    <property type="entry name" value="DNA (CYTOSINE-5)-METHYLTRANSFERASE 1"/>
    <property type="match status" value="1"/>
</dbReference>
<dbReference type="Pfam" id="PF00145">
    <property type="entry name" value="DNA_methylase"/>
    <property type="match status" value="1"/>
</dbReference>
<dbReference type="PRINTS" id="PR00105">
    <property type="entry name" value="C5METTRFRASE"/>
</dbReference>
<dbReference type="SUPFAM" id="SSF53335">
    <property type="entry name" value="S-adenosyl-L-methionine-dependent methyltransferases"/>
    <property type="match status" value="1"/>
</dbReference>
<dbReference type="PROSITE" id="PS00094">
    <property type="entry name" value="C5_MTASE_1"/>
    <property type="match status" value="1"/>
</dbReference>
<dbReference type="PROSITE" id="PS00095">
    <property type="entry name" value="C5_MTASE_2"/>
    <property type="match status" value="1"/>
</dbReference>
<dbReference type="PROSITE" id="PS51679">
    <property type="entry name" value="SAM_MT_C5"/>
    <property type="match status" value="1"/>
</dbReference>
<proteinExistence type="inferred from homology"/>
<name>MTD1_HERAU</name>
<gene>
    <name evidence="4" type="primary">hgiDIM</name>
</gene>
<reference key="1">
    <citation type="journal article" date="1991" name="Nucleic Acids Res.">
        <title>Stepwise cloning and molecular characterization of the HgiDI restriction-modification system from Herpetosiphon giganteus Hpa2.</title>
        <authorList>
            <person name="Duesterhoeft A."/>
            <person name="Erdmann D."/>
            <person name="Kroeger M."/>
        </authorList>
    </citation>
    <scope>NUCLEOTIDE SEQUENCE [GENOMIC DNA]</scope>
    <scope>FUNCTION</scope>
    <source>
        <strain>HPA2</strain>
    </source>
</reference>
<reference key="2">
    <citation type="journal article" date="1995" name="Gene">
        <title>Organization and gene expression within restriction-modification systems of Herpetosiphon giganteus.</title>
        <authorList>
            <person name="Kroeger M."/>
            <person name="Blum E."/>
            <person name="Deppe E."/>
            <person name="Duesterhoeft A."/>
            <person name="Erdmann D."/>
            <person name="Kilz S."/>
            <person name="Meyer-Rogge S."/>
            <person name="Moestl D."/>
        </authorList>
    </citation>
    <scope>DISCUSSION OF SEQUENCE</scope>
</reference>
<reference key="3">
    <citation type="journal article" date="2003" name="Nucleic Acids Res.">
        <title>A nomenclature for restriction enzymes, DNA methyltransferases, homing endonucleases and their genes.</title>
        <authorList>
            <person name="Roberts R.J."/>
            <person name="Belfort M."/>
            <person name="Bestor T."/>
            <person name="Bhagwat A.S."/>
            <person name="Bickle T.A."/>
            <person name="Bitinaite J."/>
            <person name="Blumenthal R.M."/>
            <person name="Degtyarev S.K."/>
            <person name="Dryden D.T."/>
            <person name="Dybvig K."/>
            <person name="Firman K."/>
            <person name="Gromova E.S."/>
            <person name="Gumport R.I."/>
            <person name="Halford S.E."/>
            <person name="Hattman S."/>
            <person name="Heitman J."/>
            <person name="Hornby D.P."/>
            <person name="Janulaitis A."/>
            <person name="Jeltsch A."/>
            <person name="Josephsen J."/>
            <person name="Kiss A."/>
            <person name="Klaenhammer T.R."/>
            <person name="Kobayashi I."/>
            <person name="Kong H."/>
            <person name="Krueger D.H."/>
            <person name="Lacks S."/>
            <person name="Marinus M.G."/>
            <person name="Miyahara M."/>
            <person name="Morgan R.D."/>
            <person name="Murray N.E."/>
            <person name="Nagaraja V."/>
            <person name="Piekarowicz A."/>
            <person name="Pingoud A."/>
            <person name="Raleigh E."/>
            <person name="Rao D.N."/>
            <person name="Reich N."/>
            <person name="Repin V.E."/>
            <person name="Selker E.U."/>
            <person name="Shaw P.C."/>
            <person name="Stein D.C."/>
            <person name="Stoddard B.L."/>
            <person name="Szybalski W."/>
            <person name="Trautner T.A."/>
            <person name="Van Etten J.L."/>
            <person name="Vitor J.M."/>
            <person name="Wilson G.G."/>
            <person name="Xu S.Y."/>
        </authorList>
    </citation>
    <scope>NOMENCLATURE</scope>
</reference>
<protein>
    <recommendedName>
        <fullName evidence="3">Type II methyltransferase M.HgiDI</fullName>
        <shortName evidence="4">M.HgiDI</shortName>
        <ecNumber>2.1.1.37</ecNumber>
    </recommendedName>
    <alternativeName>
        <fullName>Cytosine-specific methyltransferase HgiDI</fullName>
    </alternativeName>
    <alternativeName>
        <fullName>Modification methylase HgiDI</fullName>
    </alternativeName>
</protein>
<feature type="chain" id="PRO_0000087888" description="Type II methyltransferase M.HgiDI">
    <location>
        <begin position="1"/>
        <end position="309"/>
    </location>
</feature>
<feature type="domain" description="SAM-dependent MTase C5-type" evidence="1">
    <location>
        <begin position="1"/>
        <end position="297"/>
    </location>
</feature>
<feature type="active site" evidence="1 2">
    <location>
        <position position="75"/>
    </location>
</feature>
<evidence type="ECO:0000255" key="1">
    <source>
        <dbReference type="PROSITE-ProRule" id="PRU01016"/>
    </source>
</evidence>
<evidence type="ECO:0000255" key="2">
    <source>
        <dbReference type="PROSITE-ProRule" id="PRU10018"/>
    </source>
</evidence>
<evidence type="ECO:0000303" key="3">
    <source>
    </source>
</evidence>
<evidence type="ECO:0000303" key="4">
    <source>
    </source>
</evidence>
<evidence type="ECO:0000303" key="5">
    <source>
    </source>
</evidence>
<evidence type="ECO:0000305" key="6">
    <source>
    </source>
</evidence>